<sequence length="262" mass="28119">MGFLTGKRILVTGLASNRSIAYGIAKSMKEQGAELAFTYLNDKLQPRVEEFAKEFGSDIVLPLDVATDESIQNCFAELSKRWDKFDGFIHAIAFAPGDQLDGDYVNAATREGYRIAHDISAYSFVAMAQAARPYLNPNAALLTLSYLGAERAIPNYNVMCLAKASLEAATRVMAADLGKEGIRVNAISAGPIRTLAASGIKNFKKMLSTFEKTAALRRTVTIEDVGNSAAFLCSDLASGITGEIVHVDAGFSITAMGELGEE</sequence>
<proteinExistence type="inferred from homology"/>
<reference key="1">
    <citation type="journal article" date="1995" name="Science">
        <title>Whole-genome random sequencing and assembly of Haemophilus influenzae Rd.</title>
        <authorList>
            <person name="Fleischmann R.D."/>
            <person name="Adams M.D."/>
            <person name="White O."/>
            <person name="Clayton R.A."/>
            <person name="Kirkness E.F."/>
            <person name="Kerlavage A.R."/>
            <person name="Bult C.J."/>
            <person name="Tomb J.-F."/>
            <person name="Dougherty B.A."/>
            <person name="Merrick J.M."/>
            <person name="McKenney K."/>
            <person name="Sutton G.G."/>
            <person name="FitzHugh W."/>
            <person name="Fields C.A."/>
            <person name="Gocayne J.D."/>
            <person name="Scott J.D."/>
            <person name="Shirley R."/>
            <person name="Liu L.-I."/>
            <person name="Glodek A."/>
            <person name="Kelley J.M."/>
            <person name="Weidman J.F."/>
            <person name="Phillips C.A."/>
            <person name="Spriggs T."/>
            <person name="Hedblom E."/>
            <person name="Cotton M.D."/>
            <person name="Utterback T.R."/>
            <person name="Hanna M.C."/>
            <person name="Nguyen D.T."/>
            <person name="Saudek D.M."/>
            <person name="Brandon R.C."/>
            <person name="Fine L.D."/>
            <person name="Fritchman J.L."/>
            <person name="Fuhrmann J.L."/>
            <person name="Geoghagen N.S.M."/>
            <person name="Gnehm C.L."/>
            <person name="McDonald L.A."/>
            <person name="Small K.V."/>
            <person name="Fraser C.M."/>
            <person name="Smith H.O."/>
            <person name="Venter J.C."/>
        </authorList>
    </citation>
    <scope>NUCLEOTIDE SEQUENCE [LARGE SCALE GENOMIC DNA]</scope>
    <source>
        <strain>ATCC 51907 / DSM 11121 / KW20 / Rd</strain>
    </source>
</reference>
<reference key="2">
    <citation type="journal article" date="2002" name="J. Med. Chem.">
        <title>Discovery of aminopyridine-based inhibitors of bacterial enoyl-ACP reductase (FabI).</title>
        <authorList>
            <person name="Miller W.H."/>
            <person name="Seefeld M.A."/>
            <person name="Newlander K.A."/>
            <person name="Uzinskas I.N."/>
            <person name="Burgess W.J."/>
            <person name="Heerding D.A."/>
            <person name="Yuan C.C."/>
            <person name="Head M.S."/>
            <person name="Payne D.J."/>
            <person name="Rittenhouse S.F."/>
            <person name="Moore T.D."/>
            <person name="Pearson S.C."/>
            <person name="Berry V."/>
            <person name="DeWolf W.E. Jr."/>
            <person name="Keller P.M."/>
            <person name="Polizzi B.J."/>
            <person name="Qiu X."/>
            <person name="Janson C.A."/>
            <person name="Huffman W.F."/>
        </authorList>
    </citation>
    <scope>ACTIVITY REGULATION</scope>
</reference>
<reference key="3">
    <citation type="journal article" date="2003" name="J. Med. Chem.">
        <title>Indole naphthyridinones as inhibitors of bacterial enoyl-ACP reductases FabI and FabK.</title>
        <authorList>
            <person name="Seefeld M.A."/>
            <person name="Miller W.H."/>
            <person name="Newlander K.A."/>
            <person name="Burgess W.J."/>
            <person name="DeWolf W.E. Jr."/>
            <person name="Elkins P.A."/>
            <person name="Head M.S."/>
            <person name="Jakas D.R."/>
            <person name="Janson C.A."/>
            <person name="Keller P.M."/>
            <person name="Manley P.J."/>
            <person name="Moore T.D."/>
            <person name="Payne D.J."/>
            <person name="Pearson S."/>
            <person name="Polizzi B.J."/>
            <person name="Qiu X."/>
            <person name="Rittenhouse S.F."/>
            <person name="Uzinskas I.N."/>
            <person name="Wallis N.G."/>
            <person name="Huffman W.F."/>
        </authorList>
    </citation>
    <scope>ACTIVITY REGULATION</scope>
</reference>
<organism>
    <name type="scientific">Haemophilus influenzae (strain ATCC 51907 / DSM 11121 / KW20 / Rd)</name>
    <dbReference type="NCBI Taxonomy" id="71421"/>
    <lineage>
        <taxon>Bacteria</taxon>
        <taxon>Pseudomonadati</taxon>
        <taxon>Pseudomonadota</taxon>
        <taxon>Gammaproteobacteria</taxon>
        <taxon>Pasteurellales</taxon>
        <taxon>Pasteurellaceae</taxon>
        <taxon>Haemophilus</taxon>
    </lineage>
</organism>
<dbReference type="EC" id="1.3.1.9"/>
<dbReference type="EMBL" id="L42023">
    <property type="protein sequence ID" value="AAC23379.1"/>
    <property type="molecule type" value="Genomic_DNA"/>
</dbReference>
<dbReference type="PIR" id="B64139">
    <property type="entry name" value="B64139"/>
</dbReference>
<dbReference type="RefSeq" id="NP_439876.2">
    <property type="nucleotide sequence ID" value="NC_000907.1"/>
</dbReference>
<dbReference type="SMR" id="P44432"/>
<dbReference type="STRING" id="71421.HI_1734"/>
<dbReference type="BindingDB" id="P44432"/>
<dbReference type="ChEMBL" id="CHEMBL5291548"/>
<dbReference type="EnsemblBacteria" id="AAC23379">
    <property type="protein sequence ID" value="AAC23379"/>
    <property type="gene ID" value="HI_1734"/>
</dbReference>
<dbReference type="KEGG" id="hin:HI_1734"/>
<dbReference type="PATRIC" id="fig|71421.8.peg.1815"/>
<dbReference type="eggNOG" id="COG0623">
    <property type="taxonomic scope" value="Bacteria"/>
</dbReference>
<dbReference type="HOGENOM" id="CLU_010194_10_1_6"/>
<dbReference type="OrthoDB" id="9803628at2"/>
<dbReference type="PhylomeDB" id="P44432"/>
<dbReference type="BioCyc" id="HINF71421:G1GJ1-1750-MONOMER"/>
<dbReference type="SABIO-RK" id="P44432"/>
<dbReference type="UniPathway" id="UPA00094"/>
<dbReference type="Proteomes" id="UP000000579">
    <property type="component" value="Chromosome"/>
</dbReference>
<dbReference type="GO" id="GO:0004318">
    <property type="term" value="F:enoyl-[acyl-carrier-protein] reductase (NADH) activity"/>
    <property type="evidence" value="ECO:0000250"/>
    <property type="project" value="UniProtKB"/>
</dbReference>
<dbReference type="GO" id="GO:0042802">
    <property type="term" value="F:identical protein binding"/>
    <property type="evidence" value="ECO:0000250"/>
    <property type="project" value="UniProtKB"/>
</dbReference>
<dbReference type="GO" id="GO:0030497">
    <property type="term" value="P:fatty acid elongation"/>
    <property type="evidence" value="ECO:0000250"/>
    <property type="project" value="UniProtKB"/>
</dbReference>
<dbReference type="CDD" id="cd05372">
    <property type="entry name" value="ENR_SDR"/>
    <property type="match status" value="1"/>
</dbReference>
<dbReference type="FunFam" id="3.40.50.720:FF:000054">
    <property type="entry name" value="Enoyl-[acyl-carrier-protein] reductase [NADH]"/>
    <property type="match status" value="1"/>
</dbReference>
<dbReference type="Gene3D" id="3.40.50.720">
    <property type="entry name" value="NAD(P)-binding Rossmann-like Domain"/>
    <property type="match status" value="1"/>
</dbReference>
<dbReference type="InterPro" id="IPR014358">
    <property type="entry name" value="Enoyl-ACP_Rdtase_NADH"/>
</dbReference>
<dbReference type="InterPro" id="IPR036291">
    <property type="entry name" value="NAD(P)-bd_dom_sf"/>
</dbReference>
<dbReference type="InterPro" id="IPR002347">
    <property type="entry name" value="SDR_fam"/>
</dbReference>
<dbReference type="PANTHER" id="PTHR43159">
    <property type="entry name" value="ENOYL-[ACYL-CARRIER-PROTEIN] REDUCTASE"/>
    <property type="match status" value="1"/>
</dbReference>
<dbReference type="PANTHER" id="PTHR43159:SF2">
    <property type="entry name" value="ENOYL-[ACYL-CARRIER-PROTEIN] REDUCTASE [NADH], CHLOROPLASTIC"/>
    <property type="match status" value="1"/>
</dbReference>
<dbReference type="Pfam" id="PF13561">
    <property type="entry name" value="adh_short_C2"/>
    <property type="match status" value="1"/>
</dbReference>
<dbReference type="PIRSF" id="PIRSF000094">
    <property type="entry name" value="Enoyl-ACP_rdct"/>
    <property type="match status" value="1"/>
</dbReference>
<dbReference type="PRINTS" id="PR00081">
    <property type="entry name" value="GDHRDH"/>
</dbReference>
<dbReference type="SUPFAM" id="SSF51735">
    <property type="entry name" value="NAD(P)-binding Rossmann-fold domains"/>
    <property type="match status" value="1"/>
</dbReference>
<gene>
    <name type="primary">fabI</name>
    <name type="synonym">envM</name>
    <name type="ordered locus">HI_1734</name>
</gene>
<accession>P44432</accession>
<comment type="function">
    <text evidence="1">Catalyzes the reduction of a carbon-carbon double bond in an enoyl moiety that is covalently linked to an acyl carrier protein (ACP). Involved in the elongation cycle of fatty acid which are used in the lipid metabolism (By similarity).</text>
</comment>
<comment type="catalytic activity">
    <reaction>
        <text>a 2,3-saturated acyl-[ACP] + NAD(+) = a (2E)-enoyl-[ACP] + NADH + H(+)</text>
        <dbReference type="Rhea" id="RHEA:10240"/>
        <dbReference type="Rhea" id="RHEA-COMP:9925"/>
        <dbReference type="Rhea" id="RHEA-COMP:9926"/>
        <dbReference type="ChEBI" id="CHEBI:15378"/>
        <dbReference type="ChEBI" id="CHEBI:57540"/>
        <dbReference type="ChEBI" id="CHEBI:57945"/>
        <dbReference type="ChEBI" id="CHEBI:78784"/>
        <dbReference type="ChEBI" id="CHEBI:78785"/>
        <dbReference type="EC" id="1.3.1.9"/>
    </reaction>
</comment>
<comment type="activity regulation">
    <text evidence="2 3">Inhibited by 1,4-benzodiazepine and naphthyridinone derivatives.</text>
</comment>
<comment type="pathway">
    <text>Lipid metabolism; fatty acid biosynthesis.</text>
</comment>
<comment type="similarity">
    <text evidence="4">Belongs to the short-chain dehydrogenases/reductases (SDR) family. FabI subfamily.</text>
</comment>
<name>FABI_HAEIN</name>
<evidence type="ECO:0000250" key="1"/>
<evidence type="ECO:0000269" key="2">
    <source>
    </source>
</evidence>
<evidence type="ECO:0000269" key="3">
    <source>
    </source>
</evidence>
<evidence type="ECO:0000305" key="4"/>
<feature type="initiator methionine" description="Removed" evidence="1">
    <location>
        <position position="1"/>
    </location>
</feature>
<feature type="chain" id="PRO_0000054901" description="Enoyl-[acyl-carrier-protein] reductase [NADH] FabI">
    <location>
        <begin position="2"/>
        <end position="262"/>
    </location>
</feature>
<feature type="active site" description="Proton acceptor" evidence="1">
    <location>
        <position position="146"/>
    </location>
</feature>
<feature type="active site" description="Proton acceptor" evidence="1">
    <location>
        <position position="156"/>
    </location>
</feature>
<feature type="binding site" evidence="1">
    <location>
        <position position="13"/>
    </location>
    <ligand>
        <name>NAD(+)</name>
        <dbReference type="ChEBI" id="CHEBI:57540"/>
    </ligand>
</feature>
<feature type="binding site" evidence="1">
    <location>
        <begin position="19"/>
        <end position="20"/>
    </location>
    <ligand>
        <name>NAD(+)</name>
        <dbReference type="ChEBI" id="CHEBI:57540"/>
    </ligand>
</feature>
<feature type="binding site" evidence="1">
    <location>
        <begin position="64"/>
        <end position="65"/>
    </location>
    <ligand>
        <name>NAD(+)</name>
        <dbReference type="ChEBI" id="CHEBI:57540"/>
    </ligand>
</feature>
<feature type="binding site" evidence="1">
    <location>
        <position position="92"/>
    </location>
    <ligand>
        <name>NAD(+)</name>
        <dbReference type="ChEBI" id="CHEBI:57540"/>
    </ligand>
</feature>
<feature type="binding site" evidence="1">
    <location>
        <position position="95"/>
    </location>
    <ligand>
        <name>substrate</name>
    </ligand>
</feature>
<feature type="binding site" evidence="1">
    <location>
        <position position="163"/>
    </location>
    <ligand>
        <name>NAD(+)</name>
        <dbReference type="ChEBI" id="CHEBI:57540"/>
    </ligand>
</feature>
<feature type="binding site" evidence="1">
    <location>
        <begin position="192"/>
        <end position="196"/>
    </location>
    <ligand>
        <name>NAD(+)</name>
        <dbReference type="ChEBI" id="CHEBI:57540"/>
    </ligand>
</feature>
<feature type="site" description="Involved in acyl-ACP binding" evidence="1">
    <location>
        <position position="201"/>
    </location>
</feature>
<feature type="site" description="Involved in acyl-ACP binding" evidence="1">
    <location>
        <position position="204"/>
    </location>
</feature>
<feature type="site" description="Involved in acyl-ACP binding" evidence="1">
    <location>
        <position position="205"/>
    </location>
</feature>
<protein>
    <recommendedName>
        <fullName>Enoyl-[acyl-carrier-protein] reductase [NADH] FabI</fullName>
        <shortName>ENR</shortName>
        <ecNumber>1.3.1.9</ecNumber>
    </recommendedName>
    <alternativeName>
        <fullName>NADH-dependent enoyl-ACP reductase</fullName>
    </alternativeName>
</protein>
<keyword id="KW-0275">Fatty acid biosynthesis</keyword>
<keyword id="KW-0276">Fatty acid metabolism</keyword>
<keyword id="KW-0444">Lipid biosynthesis</keyword>
<keyword id="KW-0443">Lipid metabolism</keyword>
<keyword id="KW-0520">NAD</keyword>
<keyword id="KW-0560">Oxidoreductase</keyword>
<keyword id="KW-1185">Reference proteome</keyword>